<gene>
    <name type="primary">MYO1G</name>
    <name type="synonym">HA2</name>
</gene>
<keyword id="KW-0007">Acetylation</keyword>
<keyword id="KW-0009">Actin-binding</keyword>
<keyword id="KW-1064">Adaptive immunity</keyword>
<keyword id="KW-0025">Alternative splicing</keyword>
<keyword id="KW-0067">ATP-binding</keyword>
<keyword id="KW-0112">Calmodulin-binding</keyword>
<keyword id="KW-1003">Cell membrane</keyword>
<keyword id="KW-0966">Cell projection</keyword>
<keyword id="KW-0903">Direct protein sequencing</keyword>
<keyword id="KW-0391">Immunity</keyword>
<keyword id="KW-0446">Lipid-binding</keyword>
<keyword id="KW-0472">Membrane</keyword>
<keyword id="KW-0505">Motor protein</keyword>
<keyword id="KW-0518">Myosin</keyword>
<keyword id="KW-0547">Nucleotide-binding</keyword>
<keyword id="KW-1267">Proteomics identification</keyword>
<keyword id="KW-1185">Reference proteome</keyword>
<name>MYO1G_HUMAN</name>
<reference key="1">
    <citation type="submission" date="2002-01" db="EMBL/GenBank/DDBJ databases">
        <title>The nucleotide sequence of a long cDNA clone isolated from human spleen.</title>
        <authorList>
            <person name="Jikuya H."/>
            <person name="Takano J."/>
            <person name="Nomura N."/>
            <person name="Kikuno R."/>
            <person name="Nagase T."/>
            <person name="Ohara O."/>
        </authorList>
    </citation>
    <scope>NUCLEOTIDE SEQUENCE [LARGE SCALE MRNA] (ISOFORM 2)</scope>
    <scope>NUCLEOTIDE SEQUENCE [LARGE SCALE MRNA] OF 193-1018 (ISOFORM 3)</scope>
    <scope>VARIANT THR-489</scope>
    <source>
        <tissue>Spleen</tissue>
    </source>
</reference>
<reference key="2">
    <citation type="submission" date="2007-01" db="EMBL/GenBank/DDBJ databases">
        <title>Multiplex amplification and cloning of 5'-ends of cDNA by ligase-free recombination: preparation of full-length cDNA clones encoding motor proteins.</title>
        <authorList>
            <person name="Yamakawa H."/>
            <person name="Kikuno R.F."/>
            <person name="Nagase T."/>
            <person name="Ohara O."/>
        </authorList>
    </citation>
    <scope>NUCLEOTIDE SEQUENCE [LARGE SCALE MRNA] (ISOFORM 1)</scope>
    <scope>VARIANTS THR-489 AND ARG-861</scope>
    <source>
        <tissue>Spleen</tissue>
    </source>
</reference>
<reference key="3">
    <citation type="journal article" date="2003" name="Nature">
        <title>The DNA sequence of human chromosome 7.</title>
        <authorList>
            <person name="Hillier L.W."/>
            <person name="Fulton R.S."/>
            <person name="Fulton L.A."/>
            <person name="Graves T.A."/>
            <person name="Pepin K.H."/>
            <person name="Wagner-McPherson C."/>
            <person name="Layman D."/>
            <person name="Maas J."/>
            <person name="Jaeger S."/>
            <person name="Walker R."/>
            <person name="Wylie K."/>
            <person name="Sekhon M."/>
            <person name="Becker M.C."/>
            <person name="O'Laughlin M.D."/>
            <person name="Schaller M.E."/>
            <person name="Fewell G.A."/>
            <person name="Delehaunty K.D."/>
            <person name="Miner T.L."/>
            <person name="Nash W.E."/>
            <person name="Cordes M."/>
            <person name="Du H."/>
            <person name="Sun H."/>
            <person name="Edwards J."/>
            <person name="Bradshaw-Cordum H."/>
            <person name="Ali J."/>
            <person name="Andrews S."/>
            <person name="Isak A."/>
            <person name="Vanbrunt A."/>
            <person name="Nguyen C."/>
            <person name="Du F."/>
            <person name="Lamar B."/>
            <person name="Courtney L."/>
            <person name="Kalicki J."/>
            <person name="Ozersky P."/>
            <person name="Bielicki L."/>
            <person name="Scott K."/>
            <person name="Holmes A."/>
            <person name="Harkins R."/>
            <person name="Harris A."/>
            <person name="Strong C.M."/>
            <person name="Hou S."/>
            <person name="Tomlinson C."/>
            <person name="Dauphin-Kohlberg S."/>
            <person name="Kozlowicz-Reilly A."/>
            <person name="Leonard S."/>
            <person name="Rohlfing T."/>
            <person name="Rock S.M."/>
            <person name="Tin-Wollam A.-M."/>
            <person name="Abbott A."/>
            <person name="Minx P."/>
            <person name="Maupin R."/>
            <person name="Strowmatt C."/>
            <person name="Latreille P."/>
            <person name="Miller N."/>
            <person name="Johnson D."/>
            <person name="Murray J."/>
            <person name="Woessner J.P."/>
            <person name="Wendl M.C."/>
            <person name="Yang S.-P."/>
            <person name="Schultz B.R."/>
            <person name="Wallis J.W."/>
            <person name="Spieth J."/>
            <person name="Bieri T.A."/>
            <person name="Nelson J.O."/>
            <person name="Berkowicz N."/>
            <person name="Wohldmann P.E."/>
            <person name="Cook L.L."/>
            <person name="Hickenbotham M.T."/>
            <person name="Eldred J."/>
            <person name="Williams D."/>
            <person name="Bedell J.A."/>
            <person name="Mardis E.R."/>
            <person name="Clifton S.W."/>
            <person name="Chissoe S.L."/>
            <person name="Marra M.A."/>
            <person name="Raymond C."/>
            <person name="Haugen E."/>
            <person name="Gillett W."/>
            <person name="Zhou Y."/>
            <person name="James R."/>
            <person name="Phelps K."/>
            <person name="Iadanoto S."/>
            <person name="Bubb K."/>
            <person name="Simms E."/>
            <person name="Levy R."/>
            <person name="Clendenning J."/>
            <person name="Kaul R."/>
            <person name="Kent W.J."/>
            <person name="Furey T.S."/>
            <person name="Baertsch R.A."/>
            <person name="Brent M.R."/>
            <person name="Keibler E."/>
            <person name="Flicek P."/>
            <person name="Bork P."/>
            <person name="Suyama M."/>
            <person name="Bailey J.A."/>
            <person name="Portnoy M.E."/>
            <person name="Torrents D."/>
            <person name="Chinwalla A.T."/>
            <person name="Gish W.R."/>
            <person name="Eddy S.R."/>
            <person name="McPherson J.D."/>
            <person name="Olson M.V."/>
            <person name="Eichler E.E."/>
            <person name="Green E.D."/>
            <person name="Waterston R.H."/>
            <person name="Wilson R.K."/>
        </authorList>
    </citation>
    <scope>NUCLEOTIDE SEQUENCE [LARGE SCALE GENOMIC DNA]</scope>
</reference>
<reference key="4">
    <citation type="journal article" date="2001" name="J. Immunol.">
        <title>The HA-2 minor histocompatibility antigen is derived from a diallelic gene encoding a novel human class I myosin protein.</title>
        <authorList>
            <person name="Pierce R.A."/>
            <person name="Field E.D."/>
            <person name="Mutis T."/>
            <person name="Golovina T.N."/>
            <person name="Von Kap-Herr C."/>
            <person name="Wilke M."/>
            <person name="Pool J."/>
            <person name="Shabanowitz J."/>
            <person name="Pettenati M.J."/>
            <person name="Eisenlohr L.C."/>
            <person name="Hunt D.F."/>
            <person name="Goulmy E."/>
            <person name="Engelhard V.H."/>
        </authorList>
    </citation>
    <scope>NUCLEOTIDE SEQUENCE [MRNA] OF 33-665 (ISOFORM 4)</scope>
    <scope>IDENTIFICATION AS THE MINOR HISTOCOMPATIBILITY ANTIGEN HA-2</scope>
    <scope>VARIANTS HA-2M MET-49 AND THR-489</scope>
    <scope>CHARACTERIZATION OF VARIANT HA-2M MET-49</scope>
    <scope>TISSUE SPECIFICITY</scope>
</reference>
<reference key="5">
    <citation type="journal article" date="1995" name="Science">
        <title>Identification of a graft versus host disease-associated human minor histocompatibility antigen.</title>
        <authorList>
            <person name="den Haan J.M.M."/>
            <person name="Sherman N.E."/>
            <person name="Blokland E."/>
            <person name="Huczko E."/>
            <person name="Koning F."/>
            <person name="Drijfhout J.W."/>
            <person name="Skipper J."/>
            <person name="Shabanowitz J."/>
            <person name="Hunt D.F."/>
            <person name="Engelhard V.H."/>
            <person name="Goulmy E."/>
        </authorList>
    </citation>
    <scope>PROTEIN SEQUENCE OF 41-49 (ISOFORM 1)</scope>
</reference>
<reference key="6">
    <citation type="journal article" date="2004" name="Genome Res.">
        <title>The status, quality, and expansion of the NIH full-length cDNA project: the Mammalian Gene Collection (MGC).</title>
        <authorList>
            <consortium name="The MGC Project Team"/>
        </authorList>
    </citation>
    <scope>NUCLEOTIDE SEQUENCE [LARGE SCALE MRNA] OF 723-1018 (ISOFORM 1)</scope>
    <scope>VARIANT ARG-861</scope>
    <source>
        <tissue>B-cell</tissue>
    </source>
</reference>
<reference key="7">
    <citation type="journal article" date="2010" name="FEBS Lett.">
        <title>Myosin 1G (Myo1G) is a haematopoietic specific myosin that localises to the plasma membrane and regulates cell elasticity.</title>
        <authorList>
            <person name="Olety B."/>
            <person name="Walte M."/>
            <person name="Honnert U."/>
            <person name="Schillers H."/>
            <person name="Bahler M."/>
        </authorList>
    </citation>
    <scope>SUBCELLULAR LOCATION</scope>
</reference>
<reference key="8">
    <citation type="journal article" date="2010" name="J. Biol. Chem.">
        <title>Myosin 1G is an abundant class I myosin in lymphocytes whose localization at the plasma membrane depends on its ancient divergent pleckstrin homology (PH) domain (Myo1PH).</title>
        <authorList>
            <person name="Patino-Lopez G."/>
            <person name="Aravind L."/>
            <person name="Dong X."/>
            <person name="Kruhlak M.J."/>
            <person name="Ostap E.M."/>
            <person name="Shaw S."/>
        </authorList>
    </citation>
    <scope>SUBCELLULAR LOCATION</scope>
    <scope>TISSUE SPECIFICITY</scope>
    <scope>MUTAGENESIS OF LYS-815; ARG-826; ARG-876; ARG-880; ARG-885; LYS-898; ARG-903; ARG-906; ARG-909; ARG-934; ARG-945; ARG-947 AND ARG-953</scope>
</reference>
<reference key="9">
    <citation type="journal article" date="2015" name="Proteomics">
        <title>N-terminome analysis of the human mitochondrial proteome.</title>
        <authorList>
            <person name="Vaca Jacome A.S."/>
            <person name="Rabilloud T."/>
            <person name="Schaeffer-Reiss C."/>
            <person name="Rompais M."/>
            <person name="Ayoub D."/>
            <person name="Lane L."/>
            <person name="Bairoch A."/>
            <person name="Van Dorsselaer A."/>
            <person name="Carapito C."/>
        </authorList>
    </citation>
    <scope>ACETYLATION [LARGE SCALE ANALYSIS] AT MET-1</scope>
    <scope>IDENTIFICATION BY MASS SPECTROMETRY [LARGE SCALE ANALYSIS]</scope>
</reference>
<sequence>MEDEEGPEYGKPDFVLLDQVTMEDFMRNLQLRFEKGRIYTYIGEVLVSVNPYQELPLYGPEAIARYQGRELYERPPHLYAVANAAYKAMKHRSRDTCIVISGESGAGKTEASKHIMQYIAAVTNPSQRAEVERVKDVLLKSTCVLEAFGNARTNRNHNSSRFGKYMDINFDFKGDPIGGHIHSYLLEKSRVLKQHVGERNFHAFYQLLRGSEDKQLHELHLERNPAVYNFTHQGAGLNMTVHSALDSDEQSHQAVTEAMRVIGFSPEEVESVHRILAAILHLGNIEFVETEEGGLQKEGLAVAEEALVDHVAELTATPRDLVLRSLLARTVASGGRELIEKGHTAAEASYARDACAKAVYQRLFEWVVNRINSVMEPRGRDPRRDGKDTVIGVLDIYGFEVFPVNSFEQFCINYCNEKLQQLFIQLILKQEQEEYEREGITWQSVEYFNNATIVDLVERPHRGILAVLDEACSSAGTITDRIFLQTLDMHHRHHLHYTSRQLCPTDKTMEFGRDFRIKHYAGDVTYSVEGFIDKNRDFLFQDFKRLLYNSTDPTLRAMWPDGQQDITEVTKRPLTAGTLFKNSMVALVENLASKEPFYVRCIKPNEDKVAGKLDENHCRHQVAYLGLLENVRVRRAGFASRQPYSRFLLRYKMTCEYTWPNHLLGSDKAAVSALLEQHGLQGDVAFGHSKLFIRSPRTLVTLEQSRARLIPIIVLLLQKAWRGTLARWRCRRLRAIYTIMRWFRRHKVRAHLAELQRRFQAARQPPLYGRDLVWPLPPAVLQPFQDTCHALFCRWRARQLVKNIPPSDMPQIKAKVAAMGALQGLRQDWGCRRAWARDYLSSATDNPTASSLFAQRLKTLQDKDGFGAVLFSSHVRKVNRFHKIRNRALLLTDQHLYKLDPDRQYRVMRAVPLEAVTGLSVTSGGDQLVVLHARGQDDLVVCLHRSRPPLDNRVGELVGVLAAHCQGEGRTLEVRVSDCIPLSHRGVRRLISVEPRPEQPEPDFRCARGSFTLLWPSR</sequence>
<organism>
    <name type="scientific">Homo sapiens</name>
    <name type="common">Human</name>
    <dbReference type="NCBI Taxonomy" id="9606"/>
    <lineage>
        <taxon>Eukaryota</taxon>
        <taxon>Metazoa</taxon>
        <taxon>Chordata</taxon>
        <taxon>Craniata</taxon>
        <taxon>Vertebrata</taxon>
        <taxon>Euteleostomi</taxon>
        <taxon>Mammalia</taxon>
        <taxon>Eutheria</taxon>
        <taxon>Euarchontoglires</taxon>
        <taxon>Primates</taxon>
        <taxon>Haplorrhini</taxon>
        <taxon>Catarrhini</taxon>
        <taxon>Hominidae</taxon>
        <taxon>Homo</taxon>
    </lineage>
</organism>
<comment type="function">
    <text evidence="2">Unconventional myosin required during immune response for detection of rare antigen-presenting cells by regulating T-cell migration. Unconventional myosins are actin-based motor molecules with ATPase activity and serve in intracellular movements. Acts as a regulator of T-cell migration by generating membrane tension, enforcing cell-intrinsic meandering search, thereby enhancing detection of rare antigens during lymph-node surveillance, enabling pathogen eradication. Also required in B-cells, where it regulates different membrane/cytoskeleton-dependent processes. Involved in Fc-gamma receptor (Fc-gamma-R) phagocytosis.</text>
</comment>
<comment type="function">
    <molecule>Minor histocompatibility antigen HA-2</molecule>
    <text evidence="5 14">Constitutes the minor histocompatibility antigen HA-2. More generally, minor histocompatibility antigens (mHags) refer to immunogenic peptide which, when complexed with MHC, can generate an immune response after recognition by specific T-cells. The peptides are derived from polymorphic intracellular proteins, which are cleaved by normal pathways of antigen processing. The binding of these peptides to MHC class I or class II molecules and their expression on the cell surface can stimulate T-cell responses and thereby trigger graft rejection or graft-versus-host disease (GVHD) after hematopoietic stem cell transplantation from HLA-identical sibling donor. GVHD is a frequent complication after bone marrow transplantation (BMT), due to mismatch of minor histocompatibility antigen in HLA-matched sibling marrow transplants. HA-2 is restricted to MHC class I HLA-A*0201.</text>
</comment>
<comment type="subunit">
    <text evidence="1">Interacts with calmodulin; via its IQ motifs.</text>
</comment>
<comment type="subcellular location">
    <subcellularLocation>
        <location evidence="7 8">Cell membrane</location>
        <topology evidence="7 8">Peripheral membrane protein</topology>
    </subcellularLocation>
    <subcellularLocation>
        <location evidence="2">Cell projection</location>
        <location evidence="2">Phagocytic cup</location>
    </subcellularLocation>
    <text evidence="2 8">Recruited to Fc-gamma receptor (Fc-gamma-R) phagocytic cup. In T-cells, transiently accumulates in discrete areas at the plasma membrane of migrating cells or when membranes are deformed (By similarity). Localization at the membrane is not highly dependent on phosphatidylinositol 4,5-bisphosphate levels. Released from the membrane in the presence of ATP. May be enriched in peripheral processes, such as microvilli or ruffles.</text>
</comment>
<comment type="alternative products">
    <event type="alternative splicing"/>
    <isoform>
        <id>B0I1T2-1</id>
        <name>1</name>
        <sequence type="displayed"/>
    </isoform>
    <isoform>
        <id>B0I1T2-2</id>
        <name>2</name>
        <sequence type="described" ref="VSP_034208 VSP_034209"/>
    </isoform>
    <isoform>
        <id>B0I1T2-3</id>
        <name>3</name>
        <sequence type="described" ref="VSP_034210"/>
    </isoform>
    <isoform>
        <id>B0I1T2-4</id>
        <name>4</name>
        <sequence type="described" ref="VSP_034211 VSP_034212"/>
    </isoform>
</comment>
<comment type="tissue specificity">
    <text evidence="5 8">Specifically expressed in hematopoietic cells.</text>
</comment>
<comment type="domain">
    <text evidence="2">The myosin tail domain mediates binding to phosphatidylinositol-3,4-bisphosphate (PtdIns(3,4)P2), phosphatidylinositol-4,5-bisphosphate (PtdIns(4,5)P2) and phosphatidylinositol-3,4,5-trisphosphate (PtdIns(3,4,5)P3) and binds to membranous compartments. It is required for recruitment to Fc-gamma receptor (Fc-gamma-R) phagocytic cups.</text>
</comment>
<comment type="similarity">
    <text evidence="14">Belongs to the TRAFAC class myosin-kinesin ATPase superfamily. Myosin family.</text>
</comment>
<comment type="caution">
    <text evidence="14">Represents an unconventional myosin. This protein should not be confused with the conventional myosin-1 (MYH1).</text>
</comment>
<comment type="sequence caution" evidence="14">
    <conflict type="erroneous translation">
        <sequence resource="EMBL-CDS" id="BAB84876"/>
    </conflict>
    <text>Wrong choice of CDS.</text>
</comment>
<dbReference type="EMBL" id="AK074050">
    <property type="protein sequence ID" value="BAB84876.1"/>
    <property type="status" value="ALT_SEQ"/>
    <property type="molecule type" value="mRNA"/>
</dbReference>
<dbReference type="EMBL" id="AK074135">
    <property type="protein sequence ID" value="BAB84961.1"/>
    <property type="molecule type" value="mRNA"/>
</dbReference>
<dbReference type="EMBL" id="AB290179">
    <property type="protein sequence ID" value="BAG06733.1"/>
    <property type="molecule type" value="mRNA"/>
</dbReference>
<dbReference type="EMBL" id="AC004847">
    <property type="status" value="NOT_ANNOTATED_CDS"/>
    <property type="molecule type" value="Genomic_DNA"/>
</dbReference>
<dbReference type="EMBL" id="AF380932">
    <property type="protein sequence ID" value="AAK58092.1"/>
    <property type="molecule type" value="mRNA"/>
</dbReference>
<dbReference type="EMBL" id="AF380933">
    <property type="protein sequence ID" value="AAK58093.1"/>
    <property type="molecule type" value="mRNA"/>
</dbReference>
<dbReference type="EMBL" id="BC015693">
    <property type="protein sequence ID" value="AAH15693.2"/>
    <property type="molecule type" value="mRNA"/>
</dbReference>
<dbReference type="CCDS" id="CCDS34629.1">
    <molecule id="B0I1T2-1"/>
</dbReference>
<dbReference type="RefSeq" id="NP_149043.2">
    <molecule id="B0I1T2-1"/>
    <property type="nucleotide sequence ID" value="NM_033054.3"/>
</dbReference>
<dbReference type="SMR" id="B0I1T2"/>
<dbReference type="BioGRID" id="122031">
    <property type="interactions" value="14"/>
</dbReference>
<dbReference type="FunCoup" id="B0I1T2">
    <property type="interactions" value="353"/>
</dbReference>
<dbReference type="IntAct" id="B0I1T2">
    <property type="interactions" value="12"/>
</dbReference>
<dbReference type="MINT" id="B0I1T2"/>
<dbReference type="STRING" id="9606.ENSP00000258787"/>
<dbReference type="GlyCosmos" id="B0I1T2">
    <property type="glycosylation" value="1 site, 1 glycan"/>
</dbReference>
<dbReference type="GlyGen" id="B0I1T2">
    <property type="glycosylation" value="2 sites, 1 O-linked glycan (1 site)"/>
</dbReference>
<dbReference type="iPTMnet" id="B0I1T2"/>
<dbReference type="MetOSite" id="B0I1T2"/>
<dbReference type="PhosphoSitePlus" id="B0I1T2"/>
<dbReference type="SwissPalm" id="B0I1T2"/>
<dbReference type="BioMuta" id="MYO1G"/>
<dbReference type="CPTAC" id="CPTAC-1620"/>
<dbReference type="jPOST" id="B0I1T2"/>
<dbReference type="MassIVE" id="B0I1T2"/>
<dbReference type="PaxDb" id="9606-ENSP00000258787"/>
<dbReference type="PeptideAtlas" id="B0I1T2"/>
<dbReference type="ProteomicsDB" id="2548">
    <molecule id="B0I1T2-1"/>
</dbReference>
<dbReference type="ProteomicsDB" id="2549">
    <molecule id="B0I1T2-2"/>
</dbReference>
<dbReference type="ProteomicsDB" id="2550">
    <molecule id="B0I1T2-3"/>
</dbReference>
<dbReference type="ProteomicsDB" id="2551">
    <molecule id="B0I1T2-4"/>
</dbReference>
<dbReference type="Antibodypedia" id="13492">
    <property type="antibodies" value="67 antibodies from 14 providers"/>
</dbReference>
<dbReference type="DNASU" id="64005"/>
<dbReference type="Ensembl" id="ENST00000258787.12">
    <molecule id="B0I1T2-1"/>
    <property type="protein sequence ID" value="ENSP00000258787.7"/>
    <property type="gene ID" value="ENSG00000136286.16"/>
</dbReference>
<dbReference type="GeneID" id="64005"/>
<dbReference type="KEGG" id="hsa:64005"/>
<dbReference type="MANE-Select" id="ENST00000258787.12">
    <property type="protein sequence ID" value="ENSP00000258787.7"/>
    <property type="RefSeq nucleotide sequence ID" value="NM_033054.3"/>
    <property type="RefSeq protein sequence ID" value="NP_149043.2"/>
</dbReference>
<dbReference type="UCSC" id="uc003tmh.3">
    <molecule id="B0I1T2-1"/>
    <property type="organism name" value="human"/>
</dbReference>
<dbReference type="AGR" id="HGNC:13880"/>
<dbReference type="CTD" id="64005"/>
<dbReference type="DisGeNET" id="64005"/>
<dbReference type="GeneCards" id="MYO1G"/>
<dbReference type="HGNC" id="HGNC:13880">
    <property type="gene designation" value="MYO1G"/>
</dbReference>
<dbReference type="HPA" id="ENSG00000136286">
    <property type="expression patterns" value="Tissue enhanced (bone marrow, lymphoid tissue)"/>
</dbReference>
<dbReference type="MIM" id="600642">
    <property type="type" value="gene"/>
</dbReference>
<dbReference type="neXtProt" id="NX_B0I1T2"/>
<dbReference type="OpenTargets" id="ENSG00000136286"/>
<dbReference type="VEuPathDB" id="HostDB:ENSG00000136286"/>
<dbReference type="eggNOG" id="KOG0160">
    <property type="taxonomic scope" value="Eukaryota"/>
</dbReference>
<dbReference type="eggNOG" id="KOG0164">
    <property type="taxonomic scope" value="Eukaryota"/>
</dbReference>
<dbReference type="GeneTree" id="ENSGT00940000158053"/>
<dbReference type="HOGENOM" id="CLU_000192_7_7_1"/>
<dbReference type="InParanoid" id="B0I1T2"/>
<dbReference type="OMA" id="MTYGDIG"/>
<dbReference type="OrthoDB" id="6108017at2759"/>
<dbReference type="PAN-GO" id="B0I1T2">
    <property type="GO annotations" value="9 GO annotations based on evolutionary models"/>
</dbReference>
<dbReference type="PhylomeDB" id="B0I1T2"/>
<dbReference type="TreeFam" id="TF312960"/>
<dbReference type="PathwayCommons" id="B0I1T2"/>
<dbReference type="SignaLink" id="B0I1T2"/>
<dbReference type="BioGRID-ORCS" id="64005">
    <property type="hits" value="31 hits in 1149 CRISPR screens"/>
</dbReference>
<dbReference type="ChiTaRS" id="MYO1G">
    <property type="organism name" value="human"/>
</dbReference>
<dbReference type="GenomeRNAi" id="64005"/>
<dbReference type="Pharos" id="B0I1T2">
    <property type="development level" value="Tbio"/>
</dbReference>
<dbReference type="PRO" id="PR:B0I1T2"/>
<dbReference type="Proteomes" id="UP000005640">
    <property type="component" value="Chromosome 7"/>
</dbReference>
<dbReference type="RNAct" id="B0I1T2">
    <property type="molecule type" value="protein"/>
</dbReference>
<dbReference type="Bgee" id="ENSG00000136286">
    <property type="expression patterns" value="Expressed in granulocyte and 156 other cell types or tissues"/>
</dbReference>
<dbReference type="ExpressionAtlas" id="B0I1T2">
    <property type="expression patterns" value="baseline and differential"/>
</dbReference>
<dbReference type="GO" id="GO:0015629">
    <property type="term" value="C:actin cytoskeleton"/>
    <property type="evidence" value="ECO:0000318"/>
    <property type="project" value="GO_Central"/>
</dbReference>
<dbReference type="GO" id="GO:0005737">
    <property type="term" value="C:cytoplasm"/>
    <property type="evidence" value="ECO:0000318"/>
    <property type="project" value="GO_Central"/>
</dbReference>
<dbReference type="GO" id="GO:0070062">
    <property type="term" value="C:extracellular exosome"/>
    <property type="evidence" value="ECO:0007005"/>
    <property type="project" value="UniProtKB"/>
</dbReference>
<dbReference type="GO" id="GO:0030175">
    <property type="term" value="C:filopodium"/>
    <property type="evidence" value="ECO:0007669"/>
    <property type="project" value="Ensembl"/>
</dbReference>
<dbReference type="GO" id="GO:0030027">
    <property type="term" value="C:lamellipodium"/>
    <property type="evidence" value="ECO:0007669"/>
    <property type="project" value="Ensembl"/>
</dbReference>
<dbReference type="GO" id="GO:0031256">
    <property type="term" value="C:leading edge membrane"/>
    <property type="evidence" value="ECO:0007669"/>
    <property type="project" value="Ensembl"/>
</dbReference>
<dbReference type="GO" id="GO:0016020">
    <property type="term" value="C:membrane"/>
    <property type="evidence" value="ECO:0007005"/>
    <property type="project" value="UniProtKB"/>
</dbReference>
<dbReference type="GO" id="GO:0005902">
    <property type="term" value="C:microvillus"/>
    <property type="evidence" value="ECO:0000318"/>
    <property type="project" value="GO_Central"/>
</dbReference>
<dbReference type="GO" id="GO:0016459">
    <property type="term" value="C:myosin complex"/>
    <property type="evidence" value="ECO:0007669"/>
    <property type="project" value="UniProtKB-KW"/>
</dbReference>
<dbReference type="GO" id="GO:0005654">
    <property type="term" value="C:nucleoplasm"/>
    <property type="evidence" value="ECO:0000314"/>
    <property type="project" value="HPA"/>
</dbReference>
<dbReference type="GO" id="GO:0001891">
    <property type="term" value="C:phagocytic cup"/>
    <property type="evidence" value="ECO:0000250"/>
    <property type="project" value="UniProtKB"/>
</dbReference>
<dbReference type="GO" id="GO:0005886">
    <property type="term" value="C:plasma membrane"/>
    <property type="evidence" value="ECO:0000314"/>
    <property type="project" value="HPA"/>
</dbReference>
<dbReference type="GO" id="GO:0051015">
    <property type="term" value="F:actin filament binding"/>
    <property type="evidence" value="ECO:0000318"/>
    <property type="project" value="GO_Central"/>
</dbReference>
<dbReference type="GO" id="GO:0005524">
    <property type="term" value="F:ATP binding"/>
    <property type="evidence" value="ECO:0007669"/>
    <property type="project" value="UniProtKB-KW"/>
</dbReference>
<dbReference type="GO" id="GO:0005516">
    <property type="term" value="F:calmodulin binding"/>
    <property type="evidence" value="ECO:0007669"/>
    <property type="project" value="UniProtKB-KW"/>
</dbReference>
<dbReference type="GO" id="GO:0000146">
    <property type="term" value="F:microfilament motor activity"/>
    <property type="evidence" value="ECO:0000318"/>
    <property type="project" value="GO_Central"/>
</dbReference>
<dbReference type="GO" id="GO:0005547">
    <property type="term" value="F:phosphatidylinositol-3,4,5-trisphosphate binding"/>
    <property type="evidence" value="ECO:0000250"/>
    <property type="project" value="UniProtKB"/>
</dbReference>
<dbReference type="GO" id="GO:0043325">
    <property type="term" value="F:phosphatidylinositol-3,4-bisphosphate binding"/>
    <property type="evidence" value="ECO:0000250"/>
    <property type="project" value="UniProtKB"/>
</dbReference>
<dbReference type="GO" id="GO:0005546">
    <property type="term" value="F:phosphatidylinositol-4,5-bisphosphate binding"/>
    <property type="evidence" value="ECO:0000250"/>
    <property type="project" value="UniProtKB"/>
</dbReference>
<dbReference type="GO" id="GO:0007015">
    <property type="term" value="P:actin filament organization"/>
    <property type="evidence" value="ECO:0000318"/>
    <property type="project" value="GO_Central"/>
</dbReference>
<dbReference type="GO" id="GO:0030048">
    <property type="term" value="P:actin filament-based movement"/>
    <property type="evidence" value="ECO:0000318"/>
    <property type="project" value="GO_Central"/>
</dbReference>
<dbReference type="GO" id="GO:0071976">
    <property type="term" value="P:cell gliding"/>
    <property type="evidence" value="ECO:0007669"/>
    <property type="project" value="Ensembl"/>
</dbReference>
<dbReference type="GO" id="GO:0031589">
    <property type="term" value="P:cell-substrate adhesion"/>
    <property type="evidence" value="ECO:0007669"/>
    <property type="project" value="Ensembl"/>
</dbReference>
<dbReference type="GO" id="GO:0006897">
    <property type="term" value="P:endocytosis"/>
    <property type="evidence" value="ECO:0000318"/>
    <property type="project" value="GO_Central"/>
</dbReference>
<dbReference type="GO" id="GO:0051649">
    <property type="term" value="P:establishment of localization in cell"/>
    <property type="evidence" value="ECO:0007669"/>
    <property type="project" value="Ensembl"/>
</dbReference>
<dbReference type="GO" id="GO:0006887">
    <property type="term" value="P:exocytosis"/>
    <property type="evidence" value="ECO:0007669"/>
    <property type="project" value="Ensembl"/>
</dbReference>
<dbReference type="GO" id="GO:0038096">
    <property type="term" value="P:Fc-gamma receptor signaling pathway involved in phagocytosis"/>
    <property type="evidence" value="ECO:0000250"/>
    <property type="project" value="UniProtKB"/>
</dbReference>
<dbReference type="GO" id="GO:0120117">
    <property type="term" value="P:T cell meandering migration"/>
    <property type="evidence" value="ECO:0007669"/>
    <property type="project" value="Ensembl"/>
</dbReference>
<dbReference type="GO" id="GO:0002456">
    <property type="term" value="P:T cell mediated immunity"/>
    <property type="evidence" value="ECO:0000250"/>
    <property type="project" value="UniProtKB"/>
</dbReference>
<dbReference type="GO" id="GO:0072678">
    <property type="term" value="P:T cell migration"/>
    <property type="evidence" value="ECO:0000250"/>
    <property type="project" value="UniProtKB"/>
</dbReference>
<dbReference type="CDD" id="cd01378">
    <property type="entry name" value="MYSc_Myo1"/>
    <property type="match status" value="1"/>
</dbReference>
<dbReference type="FunFam" id="1.10.10.820:FF:000015">
    <property type="entry name" value="Myosin IG"/>
    <property type="match status" value="1"/>
</dbReference>
<dbReference type="FunFam" id="1.20.5.4820:FF:000003">
    <property type="entry name" value="Unconventional myosin ID"/>
    <property type="match status" value="1"/>
</dbReference>
<dbReference type="FunFam" id="1.20.58.530:FF:000004">
    <property type="entry name" value="Unconventional myosin ID"/>
    <property type="match status" value="1"/>
</dbReference>
<dbReference type="FunFam" id="1.20.120.720:FF:000009">
    <property type="entry name" value="Unconventional myosin-Id"/>
    <property type="match status" value="1"/>
</dbReference>
<dbReference type="Gene3D" id="1.10.10.820">
    <property type="match status" value="1"/>
</dbReference>
<dbReference type="Gene3D" id="1.20.5.4820">
    <property type="match status" value="1"/>
</dbReference>
<dbReference type="Gene3D" id="1.20.58.530">
    <property type="match status" value="1"/>
</dbReference>
<dbReference type="Gene3D" id="3.40.850.10">
    <property type="entry name" value="Kinesin motor domain"/>
    <property type="match status" value="1"/>
</dbReference>
<dbReference type="Gene3D" id="1.20.120.720">
    <property type="entry name" value="Myosin VI head, motor domain, U50 subdomain"/>
    <property type="match status" value="1"/>
</dbReference>
<dbReference type="InterPro" id="IPR036961">
    <property type="entry name" value="Kinesin_motor_dom_sf"/>
</dbReference>
<dbReference type="InterPro" id="IPR001609">
    <property type="entry name" value="Myosin_head_motor_dom-like"/>
</dbReference>
<dbReference type="InterPro" id="IPR010926">
    <property type="entry name" value="Myosin_TH1"/>
</dbReference>
<dbReference type="InterPro" id="IPR036072">
    <property type="entry name" value="MYSc_Myo1"/>
</dbReference>
<dbReference type="InterPro" id="IPR027417">
    <property type="entry name" value="P-loop_NTPase"/>
</dbReference>
<dbReference type="PANTHER" id="PTHR13140">
    <property type="entry name" value="MYOSIN"/>
    <property type="match status" value="1"/>
</dbReference>
<dbReference type="PANTHER" id="PTHR13140:SF381">
    <property type="entry name" value="UNCONVENTIONAL MYOSIN-IG"/>
    <property type="match status" value="1"/>
</dbReference>
<dbReference type="Pfam" id="PF00063">
    <property type="entry name" value="Myosin_head"/>
    <property type="match status" value="1"/>
</dbReference>
<dbReference type="Pfam" id="PF06017">
    <property type="entry name" value="Myosin_TH1"/>
    <property type="match status" value="1"/>
</dbReference>
<dbReference type="PRINTS" id="PR00193">
    <property type="entry name" value="MYOSINHEAVY"/>
</dbReference>
<dbReference type="SMART" id="SM00242">
    <property type="entry name" value="MYSc"/>
    <property type="match status" value="1"/>
</dbReference>
<dbReference type="SUPFAM" id="SSF52540">
    <property type="entry name" value="P-loop containing nucleoside triphosphate hydrolases"/>
    <property type="match status" value="1"/>
</dbReference>
<dbReference type="PROSITE" id="PS51456">
    <property type="entry name" value="MYOSIN_MOTOR"/>
    <property type="match status" value="1"/>
</dbReference>
<dbReference type="PROSITE" id="PS51757">
    <property type="entry name" value="TH1"/>
    <property type="match status" value="1"/>
</dbReference>
<accession>B0I1T2</accession>
<accession>Q8TEI9</accession>
<accession>Q8TES2</accession>
<accession>Q96BE2</accession>
<accession>Q96RI5</accession>
<accession>Q96RI6</accession>
<feature type="chain" id="PRO_0000340316" description="Unconventional myosin-Ig">
    <location>
        <begin position="1"/>
        <end position="1018"/>
    </location>
</feature>
<feature type="peptide" id="PRO_0000340317" description="Minor histocompatibility antigen HA-2" evidence="9">
    <location>
        <begin position="41"/>
        <end position="49"/>
    </location>
</feature>
<feature type="domain" description="Myosin motor" evidence="3">
    <location>
        <begin position="9"/>
        <end position="707"/>
    </location>
</feature>
<feature type="domain" description="IQ">
    <location>
        <begin position="710"/>
        <end position="739"/>
    </location>
</feature>
<feature type="domain" description="TH1" evidence="4">
    <location>
        <begin position="824"/>
        <end position="1017"/>
    </location>
</feature>
<feature type="region of interest" description="Actin-binding" evidence="3">
    <location>
        <begin position="584"/>
        <end position="606"/>
    </location>
</feature>
<feature type="binding site" evidence="1">
    <location>
        <begin position="102"/>
        <end position="109"/>
    </location>
    <ligand>
        <name>ATP</name>
        <dbReference type="ChEBI" id="CHEBI:30616"/>
    </ligand>
</feature>
<feature type="modified residue" description="N-acetylmethionine" evidence="15">
    <location>
        <position position="1"/>
    </location>
</feature>
<feature type="splice variant" id="VSP_034208" description="In isoform 2." evidence="13">
    <original>LLRGSEDKQLHELHLERNPAVYNF</original>
    <variation>VSPEGKGRWKNGVGKGRAASWTSL</variation>
    <location>
        <begin position="207"/>
        <end position="230"/>
    </location>
</feature>
<feature type="splice variant" id="VSP_034209" description="In isoform 2." evidence="13">
    <location>
        <begin position="231"/>
        <end position="1018"/>
    </location>
</feature>
<feature type="splice variant" id="VSP_034210" description="In isoform 3." evidence="13">
    <location>
        <begin position="526"/>
        <end position="1018"/>
    </location>
</feature>
<feature type="splice variant" id="VSP_034211" description="In isoform 4." evidence="12">
    <original>KMTCEYTWPNHLLGSDKAAVSALLEQHGLQGDVAFGHSKLFIRSPRTLVTLEQSRARLIPIIVLLLQKAWR</original>
    <variation>WHLTPITPWAIVPVWSPRGRSRGSPNSTSQTSIQAGTSTLLASRHQNIWEDMCVSTCMWGHTGGNMGMRAV</variation>
    <location>
        <begin position="652"/>
        <end position="722"/>
    </location>
</feature>
<feature type="splice variant" id="VSP_034212" description="In isoform 4." evidence="12">
    <location>
        <begin position="723"/>
        <end position="1018"/>
    </location>
</feature>
<feature type="sequence variant" id="VAR_044013" description="In allele HA-2M; the HA-2V allele constitute the HA-2 epitope while HA-2M is not recognized by HA-2 cytotoxic T lymphocytes; dbSNP:rs61739531." evidence="5">
    <original>V</original>
    <variation>M</variation>
    <location>
        <position position="49"/>
    </location>
</feature>
<feature type="sequence variant" id="VAR_044014" description="In dbSNP:rs3735485." evidence="5 10 11">
    <original>M</original>
    <variation>T</variation>
    <location>
        <position position="489"/>
    </location>
</feature>
<feature type="sequence variant" id="VAR_050212" description="In dbSNP:rs2107737.">
    <original>R</original>
    <variation>Q</variation>
    <location>
        <position position="798"/>
    </location>
</feature>
<feature type="sequence variant" id="VAR_044015" description="In dbSNP:rs7792760." evidence="6 11">
    <original>Q</original>
    <variation>R</variation>
    <location>
        <position position="861"/>
    </location>
</feature>
<feature type="mutagenesis site" description="Reduced membrane association." evidence="8">
    <original>K</original>
    <variation>A</variation>
    <location>
        <position position="815"/>
    </location>
</feature>
<feature type="mutagenesis site" description="Reduced membrane association." evidence="8">
    <original>R</original>
    <variation>A</variation>
    <location>
        <position position="826"/>
    </location>
</feature>
<feature type="mutagenesis site" description="No effect on membrane localization." evidence="8">
    <original>R</original>
    <variation>A</variation>
    <location>
        <position position="876"/>
    </location>
</feature>
<feature type="mutagenesis site" description="No effect on membrane localization." evidence="8">
    <original>R</original>
    <variation>A</variation>
    <location>
        <position position="880"/>
    </location>
</feature>
<feature type="mutagenesis site" description="No effect on membrane localization; when associated with R-885.">
    <original>K</original>
    <variation>A</variation>
    <location>
        <position position="883"/>
    </location>
</feature>
<feature type="mutagenesis site" description="No effect on membrane localization; when associated with K-883." evidence="8">
    <original>R</original>
    <variation>A</variation>
    <location>
        <position position="885"/>
    </location>
</feature>
<feature type="mutagenesis site" description="Reduced membrane association." evidence="8">
    <original>K</original>
    <variation>A</variation>
    <location>
        <position position="898"/>
    </location>
</feature>
<feature type="mutagenesis site" description="No effect on membrane localization; when associated with R-906." evidence="8">
    <original>R</original>
    <variation>A</variation>
    <location>
        <position position="903"/>
    </location>
</feature>
<feature type="mutagenesis site" description="No effect on membrane localization; when associated with R-903." evidence="8">
    <original>R</original>
    <variation>A</variation>
    <location>
        <position position="906"/>
    </location>
</feature>
<feature type="mutagenesis site" description="No effect on membrane localization." evidence="8">
    <original>R</original>
    <variation>A</variation>
    <location>
        <position position="909"/>
    </location>
</feature>
<feature type="mutagenesis site" description="No effect on membrane localization." evidence="8">
    <original>R</original>
    <variation>A</variation>
    <location>
        <position position="934"/>
    </location>
</feature>
<feature type="mutagenesis site" description="No effect on membrane localization." evidence="8">
    <original>R</original>
    <variation>A</variation>
    <location>
        <position position="945"/>
    </location>
</feature>
<feature type="mutagenesis site" description="No effect on membrane localization." evidence="8">
    <original>R</original>
    <variation>A</variation>
    <location>
        <position position="947"/>
    </location>
</feature>
<feature type="mutagenesis site" description="No effect on membrane localization." evidence="8">
    <original>R</original>
    <variation>A</variation>
    <location>
        <position position="953"/>
    </location>
</feature>
<feature type="sequence conflict" description="In Ref. 1; BAB84961." evidence="14" ref="1">
    <original>N</original>
    <variation>K</variation>
    <location>
        <position position="369"/>
    </location>
</feature>
<feature type="sequence conflict" description="In Ref. 4; AAK58092/AAK58093." evidence="14" ref="4">
    <original>P</original>
    <variation>L</variation>
    <location>
        <position position="377"/>
    </location>
</feature>
<evidence type="ECO:0000250" key="1"/>
<evidence type="ECO:0000250" key="2">
    <source>
        <dbReference type="UniProtKB" id="Q5SUA5"/>
    </source>
</evidence>
<evidence type="ECO:0000255" key="3">
    <source>
        <dbReference type="PROSITE-ProRule" id="PRU00782"/>
    </source>
</evidence>
<evidence type="ECO:0000255" key="4">
    <source>
        <dbReference type="PROSITE-ProRule" id="PRU01093"/>
    </source>
</evidence>
<evidence type="ECO:0000269" key="5">
    <source>
    </source>
</evidence>
<evidence type="ECO:0000269" key="6">
    <source>
    </source>
</evidence>
<evidence type="ECO:0000269" key="7">
    <source>
    </source>
</evidence>
<evidence type="ECO:0000269" key="8">
    <source>
    </source>
</evidence>
<evidence type="ECO:0000269" key="9">
    <source>
    </source>
</evidence>
<evidence type="ECO:0000269" key="10">
    <source ref="1"/>
</evidence>
<evidence type="ECO:0000269" key="11">
    <source ref="2"/>
</evidence>
<evidence type="ECO:0000303" key="12">
    <source>
    </source>
</evidence>
<evidence type="ECO:0000303" key="13">
    <source ref="1"/>
</evidence>
<evidence type="ECO:0000305" key="14"/>
<evidence type="ECO:0007744" key="15">
    <source>
    </source>
</evidence>
<proteinExistence type="evidence at protein level"/>
<protein>
    <recommendedName>
        <fullName>Unconventional myosin-Ig</fullName>
    </recommendedName>
    <component>
        <recommendedName>
            <fullName evidence="12">Minor histocompatibility antigen HA-2</fullName>
            <shortName>mHag HA-2</shortName>
        </recommendedName>
    </component>
</protein>